<feature type="chain" id="PRO_1000125791" description="Small ribosomal subunit protein bS18">
    <location>
        <begin position="1"/>
        <end position="92"/>
    </location>
</feature>
<evidence type="ECO:0000255" key="1">
    <source>
        <dbReference type="HAMAP-Rule" id="MF_00270"/>
    </source>
</evidence>
<evidence type="ECO:0000305" key="2"/>
<sequence>MTDTTAPEAGAPAAAAGGARRPFFRRRKVCPFSGANAPKIDYKDVKLLQRYVSERGKIVPSRITAVSAKKQRELAKAIKRARFLALLPYVVK</sequence>
<reference key="1">
    <citation type="journal article" date="2010" name="J. Bacteriol.">
        <title>The genetic basis of laboratory adaptation in Caulobacter crescentus.</title>
        <authorList>
            <person name="Marks M.E."/>
            <person name="Castro-Rojas C.M."/>
            <person name="Teiling C."/>
            <person name="Du L."/>
            <person name="Kapatral V."/>
            <person name="Walunas T.L."/>
            <person name="Crosson S."/>
        </authorList>
    </citation>
    <scope>NUCLEOTIDE SEQUENCE [LARGE SCALE GENOMIC DNA]</scope>
    <source>
        <strain>NA1000 / CB15N</strain>
    </source>
</reference>
<dbReference type="EMBL" id="CP001340">
    <property type="protein sequence ID" value="ACL95205.1"/>
    <property type="molecule type" value="Genomic_DNA"/>
</dbReference>
<dbReference type="RefSeq" id="WP_004615089.1">
    <property type="nucleotide sequence ID" value="NC_011916.1"/>
</dbReference>
<dbReference type="RefSeq" id="YP_002517113.1">
    <property type="nucleotide sequence ID" value="NC_011916.1"/>
</dbReference>
<dbReference type="SMR" id="B8GVN5"/>
<dbReference type="GeneID" id="7331205"/>
<dbReference type="KEGG" id="ccs:CCNA_01740"/>
<dbReference type="PATRIC" id="fig|565050.3.peg.1716"/>
<dbReference type="HOGENOM" id="CLU_148710_2_1_5"/>
<dbReference type="OrthoDB" id="9812008at2"/>
<dbReference type="PhylomeDB" id="B8GVN5"/>
<dbReference type="Proteomes" id="UP000001364">
    <property type="component" value="Chromosome"/>
</dbReference>
<dbReference type="GO" id="GO:0022627">
    <property type="term" value="C:cytosolic small ribosomal subunit"/>
    <property type="evidence" value="ECO:0007669"/>
    <property type="project" value="TreeGrafter"/>
</dbReference>
<dbReference type="GO" id="GO:0070181">
    <property type="term" value="F:small ribosomal subunit rRNA binding"/>
    <property type="evidence" value="ECO:0007669"/>
    <property type="project" value="TreeGrafter"/>
</dbReference>
<dbReference type="GO" id="GO:0003735">
    <property type="term" value="F:structural constituent of ribosome"/>
    <property type="evidence" value="ECO:0007669"/>
    <property type="project" value="InterPro"/>
</dbReference>
<dbReference type="GO" id="GO:0006412">
    <property type="term" value="P:translation"/>
    <property type="evidence" value="ECO:0007669"/>
    <property type="project" value="UniProtKB-UniRule"/>
</dbReference>
<dbReference type="Gene3D" id="4.10.640.10">
    <property type="entry name" value="Ribosomal protein S18"/>
    <property type="match status" value="1"/>
</dbReference>
<dbReference type="HAMAP" id="MF_00270">
    <property type="entry name" value="Ribosomal_bS18"/>
    <property type="match status" value="1"/>
</dbReference>
<dbReference type="InterPro" id="IPR001648">
    <property type="entry name" value="Ribosomal_bS18"/>
</dbReference>
<dbReference type="InterPro" id="IPR018275">
    <property type="entry name" value="Ribosomal_bS18_CS"/>
</dbReference>
<dbReference type="InterPro" id="IPR036870">
    <property type="entry name" value="Ribosomal_bS18_sf"/>
</dbReference>
<dbReference type="NCBIfam" id="TIGR00165">
    <property type="entry name" value="S18"/>
    <property type="match status" value="1"/>
</dbReference>
<dbReference type="PANTHER" id="PTHR13479">
    <property type="entry name" value="30S RIBOSOMAL PROTEIN S18"/>
    <property type="match status" value="1"/>
</dbReference>
<dbReference type="PANTHER" id="PTHR13479:SF40">
    <property type="entry name" value="SMALL RIBOSOMAL SUBUNIT PROTEIN BS18M"/>
    <property type="match status" value="1"/>
</dbReference>
<dbReference type="Pfam" id="PF01084">
    <property type="entry name" value="Ribosomal_S18"/>
    <property type="match status" value="1"/>
</dbReference>
<dbReference type="PRINTS" id="PR00974">
    <property type="entry name" value="RIBOSOMALS18"/>
</dbReference>
<dbReference type="SUPFAM" id="SSF46911">
    <property type="entry name" value="Ribosomal protein S18"/>
    <property type="match status" value="1"/>
</dbReference>
<dbReference type="PROSITE" id="PS00057">
    <property type="entry name" value="RIBOSOMAL_S18"/>
    <property type="match status" value="1"/>
</dbReference>
<comment type="function">
    <text evidence="1">Binds as a heterodimer with protein bS6 to the central domain of the 16S rRNA, where it helps stabilize the platform of the 30S subunit.</text>
</comment>
<comment type="subunit">
    <text evidence="1">Part of the 30S ribosomal subunit. Forms a tight heterodimer with protein bS6.</text>
</comment>
<comment type="similarity">
    <text evidence="1">Belongs to the bacterial ribosomal protein bS18 family.</text>
</comment>
<name>RS18_CAUVN</name>
<organism>
    <name type="scientific">Caulobacter vibrioides (strain NA1000 / CB15N)</name>
    <name type="common">Caulobacter crescentus</name>
    <dbReference type="NCBI Taxonomy" id="565050"/>
    <lineage>
        <taxon>Bacteria</taxon>
        <taxon>Pseudomonadati</taxon>
        <taxon>Pseudomonadota</taxon>
        <taxon>Alphaproteobacteria</taxon>
        <taxon>Caulobacterales</taxon>
        <taxon>Caulobacteraceae</taxon>
        <taxon>Caulobacter</taxon>
    </lineage>
</organism>
<protein>
    <recommendedName>
        <fullName evidence="1">Small ribosomal subunit protein bS18</fullName>
    </recommendedName>
    <alternativeName>
        <fullName evidence="2">30S ribosomal protein S18</fullName>
    </alternativeName>
</protein>
<keyword id="KW-1185">Reference proteome</keyword>
<keyword id="KW-0687">Ribonucleoprotein</keyword>
<keyword id="KW-0689">Ribosomal protein</keyword>
<keyword id="KW-0694">RNA-binding</keyword>
<keyword id="KW-0699">rRNA-binding</keyword>
<gene>
    <name evidence="1" type="primary">rpsR</name>
    <name type="ordered locus">CCNA_01740</name>
</gene>
<accession>B8GVN5</accession>
<proteinExistence type="inferred from homology"/>